<protein>
    <recommendedName>
        <fullName evidence="1">Phosphopantetheine adenylyltransferase</fullName>
        <ecNumber evidence="1">2.7.7.3</ecNumber>
    </recommendedName>
    <alternativeName>
        <fullName evidence="1">Dephospho-CoA pyrophosphorylase</fullName>
    </alternativeName>
    <alternativeName>
        <fullName evidence="1">Pantetheine-phosphate adenylyltransferase</fullName>
        <shortName evidence="1">PPAT</shortName>
    </alternativeName>
</protein>
<feature type="chain" id="PRO_1000011151" description="Phosphopantetheine adenylyltransferase">
    <location>
        <begin position="1"/>
        <end position="164"/>
    </location>
</feature>
<feature type="binding site" evidence="1">
    <location>
        <begin position="10"/>
        <end position="11"/>
    </location>
    <ligand>
        <name>ATP</name>
        <dbReference type="ChEBI" id="CHEBI:30616"/>
    </ligand>
</feature>
<feature type="binding site" evidence="1">
    <location>
        <position position="10"/>
    </location>
    <ligand>
        <name>substrate</name>
    </ligand>
</feature>
<feature type="binding site" evidence="1">
    <location>
        <position position="18"/>
    </location>
    <ligand>
        <name>ATP</name>
        <dbReference type="ChEBI" id="CHEBI:30616"/>
    </ligand>
</feature>
<feature type="binding site" evidence="1">
    <location>
        <position position="42"/>
    </location>
    <ligand>
        <name>substrate</name>
    </ligand>
</feature>
<feature type="binding site" evidence="1">
    <location>
        <position position="74"/>
    </location>
    <ligand>
        <name>substrate</name>
    </ligand>
</feature>
<feature type="binding site" evidence="1">
    <location>
        <position position="88"/>
    </location>
    <ligand>
        <name>substrate</name>
    </ligand>
</feature>
<feature type="binding site" evidence="1">
    <location>
        <begin position="89"/>
        <end position="91"/>
    </location>
    <ligand>
        <name>ATP</name>
        <dbReference type="ChEBI" id="CHEBI:30616"/>
    </ligand>
</feature>
<feature type="binding site" evidence="1">
    <location>
        <position position="99"/>
    </location>
    <ligand>
        <name>ATP</name>
        <dbReference type="ChEBI" id="CHEBI:30616"/>
    </ligand>
</feature>
<feature type="binding site" evidence="1">
    <location>
        <begin position="124"/>
        <end position="130"/>
    </location>
    <ligand>
        <name>ATP</name>
        <dbReference type="ChEBI" id="CHEBI:30616"/>
    </ligand>
</feature>
<feature type="site" description="Transition state stabilizer" evidence="1">
    <location>
        <position position="18"/>
    </location>
</feature>
<keyword id="KW-0067">ATP-binding</keyword>
<keyword id="KW-0173">Coenzyme A biosynthesis</keyword>
<keyword id="KW-0963">Cytoplasm</keyword>
<keyword id="KW-0460">Magnesium</keyword>
<keyword id="KW-0547">Nucleotide-binding</keyword>
<keyword id="KW-0548">Nucleotidyltransferase</keyword>
<keyword id="KW-0808">Transferase</keyword>
<accession>A4ILY8</accession>
<reference key="1">
    <citation type="journal article" date="2007" name="Proc. Natl. Acad. Sci. U.S.A.">
        <title>Genome and proteome of long-chain alkane degrading Geobacillus thermodenitrificans NG80-2 isolated from a deep-subsurface oil reservoir.</title>
        <authorList>
            <person name="Feng L."/>
            <person name="Wang W."/>
            <person name="Cheng J."/>
            <person name="Ren Y."/>
            <person name="Zhao G."/>
            <person name="Gao C."/>
            <person name="Tang Y."/>
            <person name="Liu X."/>
            <person name="Han W."/>
            <person name="Peng X."/>
            <person name="Liu R."/>
            <person name="Wang L."/>
        </authorList>
    </citation>
    <scope>NUCLEOTIDE SEQUENCE [LARGE SCALE GENOMIC DNA]</scope>
    <source>
        <strain>NG80-2</strain>
    </source>
</reference>
<comment type="function">
    <text evidence="1">Reversibly transfers an adenylyl group from ATP to 4'-phosphopantetheine, yielding dephospho-CoA (dPCoA) and pyrophosphate.</text>
</comment>
<comment type="catalytic activity">
    <reaction evidence="1">
        <text>(R)-4'-phosphopantetheine + ATP + H(+) = 3'-dephospho-CoA + diphosphate</text>
        <dbReference type="Rhea" id="RHEA:19801"/>
        <dbReference type="ChEBI" id="CHEBI:15378"/>
        <dbReference type="ChEBI" id="CHEBI:30616"/>
        <dbReference type="ChEBI" id="CHEBI:33019"/>
        <dbReference type="ChEBI" id="CHEBI:57328"/>
        <dbReference type="ChEBI" id="CHEBI:61723"/>
        <dbReference type="EC" id="2.7.7.3"/>
    </reaction>
</comment>
<comment type="cofactor">
    <cofactor evidence="1">
        <name>Mg(2+)</name>
        <dbReference type="ChEBI" id="CHEBI:18420"/>
    </cofactor>
</comment>
<comment type="pathway">
    <text evidence="1">Cofactor biosynthesis; coenzyme A biosynthesis; CoA from (R)-pantothenate: step 4/5.</text>
</comment>
<comment type="subunit">
    <text evidence="1">Homohexamer.</text>
</comment>
<comment type="subcellular location">
    <subcellularLocation>
        <location evidence="1">Cytoplasm</location>
    </subcellularLocation>
</comment>
<comment type="similarity">
    <text evidence="1">Belongs to the bacterial CoaD family.</text>
</comment>
<name>COAD_GEOTN</name>
<gene>
    <name evidence="1" type="primary">coaD</name>
    <name type="ordered locus">GTNG_0964</name>
</gene>
<sequence length="164" mass="18387">MASIAVCPGSFDPVTYGHLDIIKRGAKVFDQVYVAVLNNSSKKPLFTVEERMELLREVTRTLDNVHVESFHGLLVDYARSKKANAILRGLRAVSDFEYEMQITSMNRVLDENIETFFMMTNSQYAFLSSSIVKEVAKYNGDISELVPPVVEAALKRKFASAVAD</sequence>
<proteinExistence type="inferred from homology"/>
<dbReference type="EC" id="2.7.7.3" evidence="1"/>
<dbReference type="EMBL" id="CP000557">
    <property type="protein sequence ID" value="ABO66342.1"/>
    <property type="molecule type" value="Genomic_DNA"/>
</dbReference>
<dbReference type="RefSeq" id="WP_008878708.1">
    <property type="nucleotide sequence ID" value="NC_009328.1"/>
</dbReference>
<dbReference type="SMR" id="A4ILY8"/>
<dbReference type="GeneID" id="87621443"/>
<dbReference type="KEGG" id="gtn:GTNG_0964"/>
<dbReference type="eggNOG" id="COG0669">
    <property type="taxonomic scope" value="Bacteria"/>
</dbReference>
<dbReference type="HOGENOM" id="CLU_100149_0_1_9"/>
<dbReference type="UniPathway" id="UPA00241">
    <property type="reaction ID" value="UER00355"/>
</dbReference>
<dbReference type="Proteomes" id="UP000001578">
    <property type="component" value="Chromosome"/>
</dbReference>
<dbReference type="GO" id="GO:0005737">
    <property type="term" value="C:cytoplasm"/>
    <property type="evidence" value="ECO:0007669"/>
    <property type="project" value="UniProtKB-SubCell"/>
</dbReference>
<dbReference type="GO" id="GO:0005524">
    <property type="term" value="F:ATP binding"/>
    <property type="evidence" value="ECO:0007669"/>
    <property type="project" value="UniProtKB-KW"/>
</dbReference>
<dbReference type="GO" id="GO:0004595">
    <property type="term" value="F:pantetheine-phosphate adenylyltransferase activity"/>
    <property type="evidence" value="ECO:0007669"/>
    <property type="project" value="UniProtKB-UniRule"/>
</dbReference>
<dbReference type="GO" id="GO:0015937">
    <property type="term" value="P:coenzyme A biosynthetic process"/>
    <property type="evidence" value="ECO:0007669"/>
    <property type="project" value="UniProtKB-UniRule"/>
</dbReference>
<dbReference type="CDD" id="cd02163">
    <property type="entry name" value="PPAT"/>
    <property type="match status" value="1"/>
</dbReference>
<dbReference type="FunFam" id="3.40.50.620:FF:000012">
    <property type="entry name" value="Phosphopantetheine adenylyltransferase"/>
    <property type="match status" value="1"/>
</dbReference>
<dbReference type="Gene3D" id="3.40.50.620">
    <property type="entry name" value="HUPs"/>
    <property type="match status" value="1"/>
</dbReference>
<dbReference type="HAMAP" id="MF_00151">
    <property type="entry name" value="PPAT_bact"/>
    <property type="match status" value="1"/>
</dbReference>
<dbReference type="InterPro" id="IPR004821">
    <property type="entry name" value="Cyt_trans-like"/>
</dbReference>
<dbReference type="InterPro" id="IPR001980">
    <property type="entry name" value="PPAT"/>
</dbReference>
<dbReference type="InterPro" id="IPR014729">
    <property type="entry name" value="Rossmann-like_a/b/a_fold"/>
</dbReference>
<dbReference type="NCBIfam" id="TIGR01510">
    <property type="entry name" value="coaD_prev_kdtB"/>
    <property type="match status" value="1"/>
</dbReference>
<dbReference type="NCBIfam" id="TIGR00125">
    <property type="entry name" value="cyt_tran_rel"/>
    <property type="match status" value="1"/>
</dbReference>
<dbReference type="PANTHER" id="PTHR21342">
    <property type="entry name" value="PHOSPHOPANTETHEINE ADENYLYLTRANSFERASE"/>
    <property type="match status" value="1"/>
</dbReference>
<dbReference type="PANTHER" id="PTHR21342:SF1">
    <property type="entry name" value="PHOSPHOPANTETHEINE ADENYLYLTRANSFERASE"/>
    <property type="match status" value="1"/>
</dbReference>
<dbReference type="Pfam" id="PF01467">
    <property type="entry name" value="CTP_transf_like"/>
    <property type="match status" value="1"/>
</dbReference>
<dbReference type="PRINTS" id="PR01020">
    <property type="entry name" value="LPSBIOSNTHSS"/>
</dbReference>
<dbReference type="SUPFAM" id="SSF52374">
    <property type="entry name" value="Nucleotidylyl transferase"/>
    <property type="match status" value="1"/>
</dbReference>
<organism>
    <name type="scientific">Geobacillus thermodenitrificans (strain NG80-2)</name>
    <dbReference type="NCBI Taxonomy" id="420246"/>
    <lineage>
        <taxon>Bacteria</taxon>
        <taxon>Bacillati</taxon>
        <taxon>Bacillota</taxon>
        <taxon>Bacilli</taxon>
        <taxon>Bacillales</taxon>
        <taxon>Anoxybacillaceae</taxon>
        <taxon>Geobacillus</taxon>
    </lineage>
</organism>
<evidence type="ECO:0000255" key="1">
    <source>
        <dbReference type="HAMAP-Rule" id="MF_00151"/>
    </source>
</evidence>